<proteinExistence type="inferred from homology"/>
<accession>B0YAK0</accession>
<reference key="1">
    <citation type="journal article" date="2008" name="PLoS Genet.">
        <title>Genomic islands in the pathogenic filamentous fungus Aspergillus fumigatus.</title>
        <authorList>
            <person name="Fedorova N.D."/>
            <person name="Khaldi N."/>
            <person name="Joardar V.S."/>
            <person name="Maiti R."/>
            <person name="Amedeo P."/>
            <person name="Anderson M.J."/>
            <person name="Crabtree J."/>
            <person name="Silva J.C."/>
            <person name="Badger J.H."/>
            <person name="Albarraq A."/>
            <person name="Angiuoli S."/>
            <person name="Bussey H."/>
            <person name="Bowyer P."/>
            <person name="Cotty P.J."/>
            <person name="Dyer P.S."/>
            <person name="Egan A."/>
            <person name="Galens K."/>
            <person name="Fraser-Liggett C.M."/>
            <person name="Haas B.J."/>
            <person name="Inman J.M."/>
            <person name="Kent R."/>
            <person name="Lemieux S."/>
            <person name="Malavazi I."/>
            <person name="Orvis J."/>
            <person name="Roemer T."/>
            <person name="Ronning C.M."/>
            <person name="Sundaram J.P."/>
            <person name="Sutton G."/>
            <person name="Turner G."/>
            <person name="Venter J.C."/>
            <person name="White O.R."/>
            <person name="Whitty B.R."/>
            <person name="Youngman P."/>
            <person name="Wolfe K.H."/>
            <person name="Goldman G.H."/>
            <person name="Wortman J.R."/>
            <person name="Jiang B."/>
            <person name="Denning D.W."/>
            <person name="Nierman W.C."/>
        </authorList>
    </citation>
    <scope>NUCLEOTIDE SEQUENCE [LARGE SCALE GENOMIC DNA]</scope>
    <source>
        <strain>CBS 144.89 / FGSC A1163 / CEA10</strain>
    </source>
</reference>
<keyword id="KW-0963">Cytoplasm</keyword>
<keyword id="KW-0349">Heme</keyword>
<keyword id="KW-0376">Hydrogen peroxide</keyword>
<keyword id="KW-0408">Iron</keyword>
<keyword id="KW-0479">Metal-binding</keyword>
<keyword id="KW-0560">Oxidoreductase</keyword>
<keyword id="KW-0575">Peroxidase</keyword>
<dbReference type="EC" id="1.11.1.21" evidence="1"/>
<dbReference type="EMBL" id="DS499600">
    <property type="protein sequence ID" value="EDP49043.1"/>
    <property type="molecule type" value="Genomic_DNA"/>
</dbReference>
<dbReference type="SMR" id="B0YAK0"/>
<dbReference type="Allergome" id="8994">
    <property type="allergen name" value="Asp f CP"/>
</dbReference>
<dbReference type="EnsemblFungi" id="EDP49043">
    <property type="protein sequence ID" value="EDP49043"/>
    <property type="gene ID" value="AFUB_084930"/>
</dbReference>
<dbReference type="VEuPathDB" id="FungiDB:AFUB_084930"/>
<dbReference type="HOGENOM" id="CLU_025424_2_0_1"/>
<dbReference type="OrthoDB" id="49144at5052"/>
<dbReference type="PhylomeDB" id="B0YAK0"/>
<dbReference type="Proteomes" id="UP000001699">
    <property type="component" value="Unassembled WGS sequence"/>
</dbReference>
<dbReference type="GO" id="GO:0005829">
    <property type="term" value="C:cytosol"/>
    <property type="evidence" value="ECO:0007669"/>
    <property type="project" value="TreeGrafter"/>
</dbReference>
<dbReference type="GO" id="GO:0004096">
    <property type="term" value="F:catalase activity"/>
    <property type="evidence" value="ECO:0007669"/>
    <property type="project" value="UniProtKB-UniRule"/>
</dbReference>
<dbReference type="GO" id="GO:0020037">
    <property type="term" value="F:heme binding"/>
    <property type="evidence" value="ECO:0007669"/>
    <property type="project" value="InterPro"/>
</dbReference>
<dbReference type="GO" id="GO:0046872">
    <property type="term" value="F:metal ion binding"/>
    <property type="evidence" value="ECO:0007669"/>
    <property type="project" value="UniProtKB-KW"/>
</dbReference>
<dbReference type="GO" id="GO:0070301">
    <property type="term" value="P:cellular response to hydrogen peroxide"/>
    <property type="evidence" value="ECO:0007669"/>
    <property type="project" value="TreeGrafter"/>
</dbReference>
<dbReference type="GO" id="GO:0042744">
    <property type="term" value="P:hydrogen peroxide catabolic process"/>
    <property type="evidence" value="ECO:0007669"/>
    <property type="project" value="UniProtKB-KW"/>
</dbReference>
<dbReference type="CDD" id="cd00649">
    <property type="entry name" value="catalase_peroxidase_1"/>
    <property type="match status" value="1"/>
</dbReference>
<dbReference type="CDD" id="cd08200">
    <property type="entry name" value="catalase_peroxidase_2"/>
    <property type="match status" value="1"/>
</dbReference>
<dbReference type="FunFam" id="1.10.420.10:FF:000002">
    <property type="entry name" value="Catalase-peroxidase"/>
    <property type="match status" value="1"/>
</dbReference>
<dbReference type="FunFam" id="1.10.420.10:FF:000004">
    <property type="entry name" value="Catalase-peroxidase"/>
    <property type="match status" value="1"/>
</dbReference>
<dbReference type="FunFam" id="1.10.520.10:FF:000002">
    <property type="entry name" value="Catalase-peroxidase"/>
    <property type="match status" value="1"/>
</dbReference>
<dbReference type="Gene3D" id="1.10.520.10">
    <property type="match status" value="2"/>
</dbReference>
<dbReference type="Gene3D" id="1.10.420.10">
    <property type="entry name" value="Peroxidase, domain 2"/>
    <property type="match status" value="2"/>
</dbReference>
<dbReference type="HAMAP" id="MF_01961">
    <property type="entry name" value="Catal_peroxid"/>
    <property type="match status" value="1"/>
</dbReference>
<dbReference type="InterPro" id="IPR000763">
    <property type="entry name" value="Catalase_peroxidase"/>
</dbReference>
<dbReference type="InterPro" id="IPR002016">
    <property type="entry name" value="Haem_peroxidase"/>
</dbReference>
<dbReference type="InterPro" id="IPR010255">
    <property type="entry name" value="Haem_peroxidase_sf"/>
</dbReference>
<dbReference type="InterPro" id="IPR019794">
    <property type="entry name" value="Peroxidases_AS"/>
</dbReference>
<dbReference type="InterPro" id="IPR019793">
    <property type="entry name" value="Peroxidases_heam-ligand_BS"/>
</dbReference>
<dbReference type="NCBIfam" id="TIGR00198">
    <property type="entry name" value="cat_per_HPI"/>
    <property type="match status" value="1"/>
</dbReference>
<dbReference type="NCBIfam" id="NF011635">
    <property type="entry name" value="PRK15061.1"/>
    <property type="match status" value="1"/>
</dbReference>
<dbReference type="PANTHER" id="PTHR30555:SF0">
    <property type="entry name" value="CATALASE-PEROXIDASE"/>
    <property type="match status" value="1"/>
</dbReference>
<dbReference type="PANTHER" id="PTHR30555">
    <property type="entry name" value="HYDROPEROXIDASE I, BIFUNCTIONAL CATALASE-PEROXIDASE"/>
    <property type="match status" value="1"/>
</dbReference>
<dbReference type="Pfam" id="PF00141">
    <property type="entry name" value="peroxidase"/>
    <property type="match status" value="2"/>
</dbReference>
<dbReference type="PRINTS" id="PR00460">
    <property type="entry name" value="BPEROXIDASE"/>
</dbReference>
<dbReference type="PRINTS" id="PR00458">
    <property type="entry name" value="PEROXIDASE"/>
</dbReference>
<dbReference type="SUPFAM" id="SSF48113">
    <property type="entry name" value="Heme-dependent peroxidases"/>
    <property type="match status" value="2"/>
</dbReference>
<dbReference type="PROSITE" id="PS00435">
    <property type="entry name" value="PEROXIDASE_1"/>
    <property type="match status" value="1"/>
</dbReference>
<dbReference type="PROSITE" id="PS00436">
    <property type="entry name" value="PEROXIDASE_2"/>
    <property type="match status" value="1"/>
</dbReference>
<dbReference type="PROSITE" id="PS50873">
    <property type="entry name" value="PEROXIDASE_4"/>
    <property type="match status" value="2"/>
</dbReference>
<evidence type="ECO:0000255" key="1">
    <source>
        <dbReference type="HAMAP-Rule" id="MF_03108"/>
    </source>
</evidence>
<evidence type="ECO:0000256" key="2">
    <source>
        <dbReference type="SAM" id="MobiDB-lite"/>
    </source>
</evidence>
<sequence length="759" mass="83762">MTQDKCPFKEQSSQPNFAGGGTSNKDWWPDRLKLNILRQHTAVSNPLDADFDYAAAFNSLDYEGLKKDLRALMTDSQDWWPADFGHYGGLFIRMAWHSAGTYRVFDGRGGAGQGQQRFAPLNSWPDNVSLDKARRLLWPIKQKYGNKISWADLLILTGNVALESMGFKTFGFAGGRPDTWEADEATYWGRETTWLGNDARYAKGFSGSDKRGSLIADEESHKTTHSRELETPLAAAHMGLIYVNPEGPDGNPDPVAAAHDIRDTFGRMAMNDEETVALIAGGHTFGKTHGAAPADNVGKEPEAAGLEAQGLGWANKHGSGKGPHTITSGLEVTWTKTPTQWNNNFLEYLFKFEWELTKSPAGAHQWVAKNADEIIPDAYDASKKHKPTMLTTDLSLRFDPAYEKIARRFLEHPDQFADAFARAWFKLTHRDMGPRARYLGPEVPSEVLIWQDPIPAVNHPLVDASDIAALKDEILASGVPPRSFISTAWAAASTFRGSDKRGGANGARIRLAPQRDWEVNNQPWLREALSALEAVQSRFNARGDSKKVSLADLIVLAGCAAVEKAAQDAGHPIKVPFVPGRMDASQEETDVQSFNHMEPFADGFRNFAKGPARPRAEHYLVDKAQLLNLSAPEMTVLVGGLRVLNTNYDGSTHGVFTSRPGALTNDFFVHLLDMNTAWKDVGNGELFEGSDRKTGGKKWTATRADLVFGSNAELRAIAEVYASNDGDMKFVKDFVAAWNKVMNLDRFDLKGKQTIPARL</sequence>
<comment type="function">
    <text evidence="1">Bifunctional enzyme with both catalase and broad-spectrum peroxidase activity.</text>
</comment>
<comment type="catalytic activity">
    <reaction evidence="1">
        <text>H2O2 + AH2 = A + 2 H2O</text>
        <dbReference type="Rhea" id="RHEA:30275"/>
        <dbReference type="ChEBI" id="CHEBI:13193"/>
        <dbReference type="ChEBI" id="CHEBI:15377"/>
        <dbReference type="ChEBI" id="CHEBI:16240"/>
        <dbReference type="ChEBI" id="CHEBI:17499"/>
        <dbReference type="EC" id="1.11.1.21"/>
    </reaction>
</comment>
<comment type="catalytic activity">
    <reaction evidence="1">
        <text>2 H2O2 = O2 + 2 H2O</text>
        <dbReference type="Rhea" id="RHEA:20309"/>
        <dbReference type="ChEBI" id="CHEBI:15377"/>
        <dbReference type="ChEBI" id="CHEBI:15379"/>
        <dbReference type="ChEBI" id="CHEBI:16240"/>
        <dbReference type="EC" id="1.11.1.21"/>
    </reaction>
</comment>
<comment type="cofactor">
    <cofactor evidence="1">
        <name>heme b</name>
        <dbReference type="ChEBI" id="CHEBI:60344"/>
    </cofactor>
    <text evidence="1">Binds 1 heme b (iron(II)-protoporphyrin IX) group per monomer.</text>
</comment>
<comment type="subunit">
    <text evidence="1">Homodimer or homotetramer.</text>
</comment>
<comment type="subcellular location">
    <subcellularLocation>
        <location evidence="1">Cytoplasm</location>
    </subcellularLocation>
</comment>
<comment type="PTM">
    <text evidence="1">Formation of the three residue Trp-Tyr-Met cross-link is important for the catalase, but not the peroxidase activity of the enzyme.</text>
</comment>
<comment type="similarity">
    <text evidence="1">Belongs to the peroxidase family. Peroxidase/catalase subfamily.</text>
</comment>
<organism>
    <name type="scientific">Aspergillus fumigatus (strain CBS 144.89 / FGSC A1163 / CEA10)</name>
    <name type="common">Neosartorya fumigata</name>
    <dbReference type="NCBI Taxonomy" id="451804"/>
    <lineage>
        <taxon>Eukaryota</taxon>
        <taxon>Fungi</taxon>
        <taxon>Dikarya</taxon>
        <taxon>Ascomycota</taxon>
        <taxon>Pezizomycotina</taxon>
        <taxon>Eurotiomycetes</taxon>
        <taxon>Eurotiomycetidae</taxon>
        <taxon>Eurotiales</taxon>
        <taxon>Aspergillaceae</taxon>
        <taxon>Aspergillus</taxon>
        <taxon>Aspergillus subgen. Fumigati</taxon>
    </lineage>
</organism>
<gene>
    <name evidence="1" type="primary">katG</name>
    <name type="ORF">AFUB_084930</name>
</gene>
<protein>
    <recommendedName>
        <fullName evidence="1">Catalase-peroxidase</fullName>
        <shortName evidence="1">CP</shortName>
        <ecNumber evidence="1">1.11.1.21</ecNumber>
    </recommendedName>
    <alternativeName>
        <fullName evidence="1">Peroxidase/catalase</fullName>
    </alternativeName>
</protein>
<name>KATG_ASPFC</name>
<feature type="chain" id="PRO_0000354099" description="Catalase-peroxidase">
    <location>
        <begin position="1"/>
        <end position="759"/>
    </location>
</feature>
<feature type="region of interest" description="Disordered" evidence="2">
    <location>
        <begin position="1"/>
        <end position="24"/>
    </location>
</feature>
<feature type="active site" description="Proton acceptor" evidence="1">
    <location>
        <position position="97"/>
    </location>
</feature>
<feature type="binding site" description="axial binding residue" evidence="1">
    <location>
        <position position="283"/>
    </location>
    <ligand>
        <name>heme b</name>
        <dbReference type="ChEBI" id="CHEBI:60344"/>
    </ligand>
    <ligandPart>
        <name>Fe</name>
        <dbReference type="ChEBI" id="CHEBI:18248"/>
    </ligandPart>
</feature>
<feature type="site" description="Transition state stabilizer" evidence="1">
    <location>
        <position position="93"/>
    </location>
</feature>
<feature type="cross-link" description="Tryptophyl-tyrosyl-methioninium (Trp-Tyr) (with M-268)" evidence="1">
    <location>
        <begin position="96"/>
        <end position="242"/>
    </location>
</feature>
<feature type="cross-link" description="Tryptophyl-tyrosyl-methioninium (Tyr-Met) (with W-96)" evidence="1">
    <location>
        <begin position="242"/>
        <end position="268"/>
    </location>
</feature>